<dbReference type="EC" id="2.1.1.170" evidence="1"/>
<dbReference type="EMBL" id="CP000970">
    <property type="protein sequence ID" value="ACB18065.1"/>
    <property type="molecule type" value="Genomic_DNA"/>
</dbReference>
<dbReference type="RefSeq" id="WP_000932838.1">
    <property type="nucleotide sequence ID" value="NC_010498.1"/>
</dbReference>
<dbReference type="SMR" id="B1LL67"/>
<dbReference type="KEGG" id="ecm:EcSMS35_4108"/>
<dbReference type="HOGENOM" id="CLU_065341_2_2_6"/>
<dbReference type="Proteomes" id="UP000007011">
    <property type="component" value="Chromosome"/>
</dbReference>
<dbReference type="GO" id="GO:0005829">
    <property type="term" value="C:cytosol"/>
    <property type="evidence" value="ECO:0007669"/>
    <property type="project" value="TreeGrafter"/>
</dbReference>
<dbReference type="GO" id="GO:0070043">
    <property type="term" value="F:rRNA (guanine-N7-)-methyltransferase activity"/>
    <property type="evidence" value="ECO:0007669"/>
    <property type="project" value="UniProtKB-UniRule"/>
</dbReference>
<dbReference type="CDD" id="cd02440">
    <property type="entry name" value="AdoMet_MTases"/>
    <property type="match status" value="1"/>
</dbReference>
<dbReference type="FunFam" id="3.40.50.150:FF:000032">
    <property type="entry name" value="Ribosomal RNA small subunit methyltransferase G"/>
    <property type="match status" value="1"/>
</dbReference>
<dbReference type="Gene3D" id="3.40.50.150">
    <property type="entry name" value="Vaccinia Virus protein VP39"/>
    <property type="match status" value="1"/>
</dbReference>
<dbReference type="HAMAP" id="MF_00074">
    <property type="entry name" value="16SrRNA_methyltr_G"/>
    <property type="match status" value="1"/>
</dbReference>
<dbReference type="InterPro" id="IPR003682">
    <property type="entry name" value="rRNA_ssu_MeTfrase_G"/>
</dbReference>
<dbReference type="InterPro" id="IPR029063">
    <property type="entry name" value="SAM-dependent_MTases_sf"/>
</dbReference>
<dbReference type="NCBIfam" id="TIGR00138">
    <property type="entry name" value="rsmG_gidB"/>
    <property type="match status" value="1"/>
</dbReference>
<dbReference type="PANTHER" id="PTHR31760">
    <property type="entry name" value="S-ADENOSYL-L-METHIONINE-DEPENDENT METHYLTRANSFERASES SUPERFAMILY PROTEIN"/>
    <property type="match status" value="1"/>
</dbReference>
<dbReference type="PANTHER" id="PTHR31760:SF0">
    <property type="entry name" value="S-ADENOSYL-L-METHIONINE-DEPENDENT METHYLTRANSFERASES SUPERFAMILY PROTEIN"/>
    <property type="match status" value="1"/>
</dbReference>
<dbReference type="Pfam" id="PF02527">
    <property type="entry name" value="GidB"/>
    <property type="match status" value="1"/>
</dbReference>
<dbReference type="PIRSF" id="PIRSF003078">
    <property type="entry name" value="GidB"/>
    <property type="match status" value="1"/>
</dbReference>
<dbReference type="SUPFAM" id="SSF53335">
    <property type="entry name" value="S-adenosyl-L-methionine-dependent methyltransferases"/>
    <property type="match status" value="1"/>
</dbReference>
<organism>
    <name type="scientific">Escherichia coli (strain SMS-3-5 / SECEC)</name>
    <dbReference type="NCBI Taxonomy" id="439855"/>
    <lineage>
        <taxon>Bacteria</taxon>
        <taxon>Pseudomonadati</taxon>
        <taxon>Pseudomonadota</taxon>
        <taxon>Gammaproteobacteria</taxon>
        <taxon>Enterobacterales</taxon>
        <taxon>Enterobacteriaceae</taxon>
        <taxon>Escherichia</taxon>
    </lineage>
</organism>
<protein>
    <recommendedName>
        <fullName evidence="1">Ribosomal RNA small subunit methyltransferase G</fullName>
        <ecNumber evidence="1">2.1.1.170</ecNumber>
    </recommendedName>
    <alternativeName>
        <fullName evidence="1">16S rRNA 7-methylguanosine methyltransferase</fullName>
        <shortName evidence="1">16S rRNA m7G methyltransferase</shortName>
    </alternativeName>
</protein>
<comment type="function">
    <text evidence="1">Specifically methylates the N7 position of guanine in position 527 of 16S rRNA.</text>
</comment>
<comment type="catalytic activity">
    <reaction evidence="1">
        <text>guanosine(527) in 16S rRNA + S-adenosyl-L-methionine = N(7)-methylguanosine(527) in 16S rRNA + S-adenosyl-L-homocysteine</text>
        <dbReference type="Rhea" id="RHEA:42732"/>
        <dbReference type="Rhea" id="RHEA-COMP:10209"/>
        <dbReference type="Rhea" id="RHEA-COMP:10210"/>
        <dbReference type="ChEBI" id="CHEBI:57856"/>
        <dbReference type="ChEBI" id="CHEBI:59789"/>
        <dbReference type="ChEBI" id="CHEBI:74269"/>
        <dbReference type="ChEBI" id="CHEBI:74480"/>
        <dbReference type="EC" id="2.1.1.170"/>
    </reaction>
</comment>
<comment type="subcellular location">
    <subcellularLocation>
        <location evidence="1">Cytoplasm</location>
    </subcellularLocation>
</comment>
<comment type="similarity">
    <text evidence="1">Belongs to the methyltransferase superfamily. RNA methyltransferase RsmG family.</text>
</comment>
<sequence>MLNKLSLLLKDAGISLTDHQKNQLIAYVNMLHKWNKAYNLTSVRDPNEMLVRHILDSIVVAPYLQGERFIDVGTGPGLPGIPLSIVRPEAHFTLLDSLGKRVRFLRQVQHELKLENIEPVQSRVEEFPSEPPFDGVISRAFASLNDMVSWCHHLPGEQGRFYALKGQMPEDEIALLPEEYQVESVVKLHVPALDGERHLVMIKANKI</sequence>
<proteinExistence type="inferred from homology"/>
<gene>
    <name evidence="1" type="primary">rsmG</name>
    <name type="ordered locus">EcSMS35_4108</name>
</gene>
<evidence type="ECO:0000255" key="1">
    <source>
        <dbReference type="HAMAP-Rule" id="MF_00074"/>
    </source>
</evidence>
<keyword id="KW-0963">Cytoplasm</keyword>
<keyword id="KW-0489">Methyltransferase</keyword>
<keyword id="KW-0698">rRNA processing</keyword>
<keyword id="KW-0949">S-adenosyl-L-methionine</keyword>
<keyword id="KW-0808">Transferase</keyword>
<accession>B1LL67</accession>
<reference key="1">
    <citation type="journal article" date="2008" name="J. Bacteriol.">
        <title>Insights into the environmental resistance gene pool from the genome sequence of the multidrug-resistant environmental isolate Escherichia coli SMS-3-5.</title>
        <authorList>
            <person name="Fricke W.F."/>
            <person name="Wright M.S."/>
            <person name="Lindell A.H."/>
            <person name="Harkins D.M."/>
            <person name="Baker-Austin C."/>
            <person name="Ravel J."/>
            <person name="Stepanauskas R."/>
        </authorList>
    </citation>
    <scope>NUCLEOTIDE SEQUENCE [LARGE SCALE GENOMIC DNA]</scope>
    <source>
        <strain>SMS-3-5 / SECEC</strain>
    </source>
</reference>
<feature type="chain" id="PRO_1000117070" description="Ribosomal RNA small subunit methyltransferase G">
    <location>
        <begin position="1"/>
        <end position="207"/>
    </location>
</feature>
<feature type="binding site" evidence="1">
    <location>
        <position position="73"/>
    </location>
    <ligand>
        <name>S-adenosyl-L-methionine</name>
        <dbReference type="ChEBI" id="CHEBI:59789"/>
    </ligand>
</feature>
<feature type="binding site" evidence="1">
    <location>
        <position position="78"/>
    </location>
    <ligand>
        <name>S-adenosyl-L-methionine</name>
        <dbReference type="ChEBI" id="CHEBI:59789"/>
    </ligand>
</feature>
<feature type="binding site" evidence="1">
    <location>
        <begin position="124"/>
        <end position="125"/>
    </location>
    <ligand>
        <name>S-adenosyl-L-methionine</name>
        <dbReference type="ChEBI" id="CHEBI:59789"/>
    </ligand>
</feature>
<feature type="binding site" evidence="1">
    <location>
        <position position="139"/>
    </location>
    <ligand>
        <name>S-adenosyl-L-methionine</name>
        <dbReference type="ChEBI" id="CHEBI:59789"/>
    </ligand>
</feature>
<name>RSMG_ECOSM</name>